<comment type="function">
    <text evidence="1">Core subunit of the mitochondrial membrane respiratory chain NADH dehydrogenase (Complex I) that is believed to belong to the minimal assembly required for catalysis. Complex I functions in the transfer of electrons from NADH to the respiratory chain. The immediate electron acceptor for the enzyme is believed to be ubiquinone (By similarity).</text>
</comment>
<comment type="catalytic activity">
    <reaction>
        <text>a ubiquinone + NADH + 5 H(+)(in) = a ubiquinol + NAD(+) + 4 H(+)(out)</text>
        <dbReference type="Rhea" id="RHEA:29091"/>
        <dbReference type="Rhea" id="RHEA-COMP:9565"/>
        <dbReference type="Rhea" id="RHEA-COMP:9566"/>
        <dbReference type="ChEBI" id="CHEBI:15378"/>
        <dbReference type="ChEBI" id="CHEBI:16389"/>
        <dbReference type="ChEBI" id="CHEBI:17976"/>
        <dbReference type="ChEBI" id="CHEBI:57540"/>
        <dbReference type="ChEBI" id="CHEBI:57945"/>
        <dbReference type="EC" id="7.1.1.2"/>
    </reaction>
</comment>
<comment type="subcellular location">
    <subcellularLocation>
        <location evidence="1">Mitochondrion membrane</location>
        <topology evidence="1">Single-pass membrane protein</topology>
    </subcellularLocation>
</comment>
<comment type="similarity">
    <text evidence="3">Belongs to the complex I subunit 3 family.</text>
</comment>
<protein>
    <recommendedName>
        <fullName>NADH-ubiquinone oxidoreductase chain 3</fullName>
        <ecNumber>7.1.1.2</ecNumber>
    </recommendedName>
    <alternativeName>
        <fullName>NADH dehydrogenase subunit 3</fullName>
    </alternativeName>
</protein>
<name>NU3M_ARTSA</name>
<accession>P19043</accession>
<proteinExistence type="inferred from homology"/>
<organism>
    <name type="scientific">Artemia salina</name>
    <name type="common">Brine shrimp</name>
    <dbReference type="NCBI Taxonomy" id="85549"/>
    <lineage>
        <taxon>Eukaryota</taxon>
        <taxon>Metazoa</taxon>
        <taxon>Ecdysozoa</taxon>
        <taxon>Arthropoda</taxon>
        <taxon>Crustacea</taxon>
        <taxon>Branchiopoda</taxon>
        <taxon>Anostraca</taxon>
        <taxon>Artemiidae</taxon>
        <taxon>Artemia</taxon>
    </lineage>
</organism>
<evidence type="ECO:0000250" key="1"/>
<evidence type="ECO:0000255" key="2"/>
<evidence type="ECO:0000305" key="3"/>
<sequence>FYYINPREFVNKKVCLDREKSSPFECGFDPLEFLSYPLFIRFFVITLIFLIFDVEIYLLLPMVYLNMSSP</sequence>
<reference key="1">
    <citation type="journal article" date="1988" name="Nucleic Acids Res.">
        <title>Genome organization of Artemia mitochondrial DNA.</title>
        <authorList>
            <person name="Batuecas B."/>
            <person name="Garesse R."/>
            <person name="Calleja M."/>
            <person name="Valverde J.R."/>
            <person name="Marco R."/>
        </authorList>
    </citation>
    <scope>NUCLEOTIDE SEQUENCE [GENOMIC DNA]</scope>
</reference>
<gene>
    <name type="primary">ND3</name>
</gene>
<dbReference type="EC" id="7.1.1.2"/>
<dbReference type="EMBL" id="X07664">
    <property type="protein sequence ID" value="CAA30511.1"/>
    <property type="molecule type" value="Genomic_DNA"/>
</dbReference>
<dbReference type="EMBL" id="X07665">
    <property type="protein sequence ID" value="CAA30512.1"/>
    <property type="molecule type" value="Genomic_DNA"/>
</dbReference>
<dbReference type="SMR" id="P19043"/>
<dbReference type="GO" id="GO:0031966">
    <property type="term" value="C:mitochondrial membrane"/>
    <property type="evidence" value="ECO:0007669"/>
    <property type="project" value="UniProtKB-SubCell"/>
</dbReference>
<dbReference type="GO" id="GO:0030964">
    <property type="term" value="C:NADH dehydrogenase complex"/>
    <property type="evidence" value="ECO:0007669"/>
    <property type="project" value="TreeGrafter"/>
</dbReference>
<dbReference type="GO" id="GO:0008137">
    <property type="term" value="F:NADH dehydrogenase (ubiquinone) activity"/>
    <property type="evidence" value="ECO:0007669"/>
    <property type="project" value="UniProtKB-EC"/>
</dbReference>
<dbReference type="Gene3D" id="1.20.58.1610">
    <property type="entry name" value="NADH:ubiquinone/plastoquinone oxidoreductase, chain 3"/>
    <property type="match status" value="1"/>
</dbReference>
<dbReference type="InterPro" id="IPR000440">
    <property type="entry name" value="NADH_UbQ/plastoQ_OxRdtase_su3"/>
</dbReference>
<dbReference type="InterPro" id="IPR038430">
    <property type="entry name" value="NDAH_ubi_oxred_su3_sf"/>
</dbReference>
<dbReference type="PANTHER" id="PTHR11058">
    <property type="entry name" value="NADH-UBIQUINONE OXIDOREDUCTASE CHAIN 3"/>
    <property type="match status" value="1"/>
</dbReference>
<dbReference type="PANTHER" id="PTHR11058:SF9">
    <property type="entry name" value="NADH-UBIQUINONE OXIDOREDUCTASE CHAIN 3"/>
    <property type="match status" value="1"/>
</dbReference>
<dbReference type="Pfam" id="PF00507">
    <property type="entry name" value="Oxidored_q4"/>
    <property type="match status" value="1"/>
</dbReference>
<feature type="chain" id="PRO_0000117708" description="NADH-ubiquinone oxidoreductase chain 3">
    <location>
        <begin position="1" status="less than"/>
        <end position="70" status="greater than"/>
    </location>
</feature>
<feature type="transmembrane region" description="Helical" evidence="2">
    <location>
        <begin position="42"/>
        <end position="62"/>
    </location>
</feature>
<feature type="non-consecutive residues" evidence="3">
    <location>
        <begin position="31"/>
        <end position="32"/>
    </location>
</feature>
<feature type="non-terminal residue">
    <location>
        <position position="1"/>
    </location>
</feature>
<feature type="non-terminal residue">
    <location>
        <position position="70"/>
    </location>
</feature>
<keyword id="KW-0249">Electron transport</keyword>
<keyword id="KW-0472">Membrane</keyword>
<keyword id="KW-0496">Mitochondrion</keyword>
<keyword id="KW-0520">NAD</keyword>
<keyword id="KW-0679">Respiratory chain</keyword>
<keyword id="KW-1278">Translocase</keyword>
<keyword id="KW-0812">Transmembrane</keyword>
<keyword id="KW-1133">Transmembrane helix</keyword>
<keyword id="KW-0813">Transport</keyword>
<keyword id="KW-0830">Ubiquinone</keyword>
<geneLocation type="mitochondrion"/>